<name>HUTU_ACIBS</name>
<comment type="function">
    <text evidence="1">Catalyzes the conversion of urocanate to 4-imidazolone-5-propionate.</text>
</comment>
<comment type="catalytic activity">
    <reaction evidence="1">
        <text>4-imidazolone-5-propanoate = trans-urocanate + H2O</text>
        <dbReference type="Rhea" id="RHEA:13101"/>
        <dbReference type="ChEBI" id="CHEBI:15377"/>
        <dbReference type="ChEBI" id="CHEBI:17771"/>
        <dbReference type="ChEBI" id="CHEBI:77893"/>
        <dbReference type="EC" id="4.2.1.49"/>
    </reaction>
</comment>
<comment type="cofactor">
    <cofactor evidence="1">
        <name>NAD(+)</name>
        <dbReference type="ChEBI" id="CHEBI:57540"/>
    </cofactor>
    <text evidence="1">Binds 1 NAD(+) per subunit.</text>
</comment>
<comment type="pathway">
    <text evidence="1">Amino-acid degradation; L-histidine degradation into L-glutamate; N-formimidoyl-L-glutamate from L-histidine: step 2/3.</text>
</comment>
<comment type="subcellular location">
    <subcellularLocation>
        <location evidence="1">Cytoplasm</location>
    </subcellularLocation>
</comment>
<comment type="similarity">
    <text evidence="1">Belongs to the urocanase family.</text>
</comment>
<organism>
    <name type="scientific">Acinetobacter baumannii (strain SDF)</name>
    <dbReference type="NCBI Taxonomy" id="509170"/>
    <lineage>
        <taxon>Bacteria</taxon>
        <taxon>Pseudomonadati</taxon>
        <taxon>Pseudomonadota</taxon>
        <taxon>Gammaproteobacteria</taxon>
        <taxon>Moraxellales</taxon>
        <taxon>Moraxellaceae</taxon>
        <taxon>Acinetobacter</taxon>
        <taxon>Acinetobacter calcoaceticus/baumannii complex</taxon>
    </lineage>
</organism>
<reference key="1">
    <citation type="journal article" date="2008" name="PLoS ONE">
        <title>Comparative analysis of Acinetobacters: three genomes for three lifestyles.</title>
        <authorList>
            <person name="Vallenet D."/>
            <person name="Nordmann P."/>
            <person name="Barbe V."/>
            <person name="Poirel L."/>
            <person name="Mangenot S."/>
            <person name="Bataille E."/>
            <person name="Dossat C."/>
            <person name="Gas S."/>
            <person name="Kreimeyer A."/>
            <person name="Lenoble P."/>
            <person name="Oztas S."/>
            <person name="Poulain J."/>
            <person name="Segurens B."/>
            <person name="Robert C."/>
            <person name="Abergel C."/>
            <person name="Claverie J.-M."/>
            <person name="Raoult D."/>
            <person name="Medigue C."/>
            <person name="Weissenbach J."/>
            <person name="Cruveiller S."/>
        </authorList>
    </citation>
    <scope>NUCLEOTIDE SEQUENCE [LARGE SCALE GENOMIC DNA]</scope>
    <source>
        <strain>SDF</strain>
    </source>
</reference>
<accession>B0VPV2</accession>
<protein>
    <recommendedName>
        <fullName evidence="1">Urocanate hydratase</fullName>
        <shortName evidence="1">Urocanase</shortName>
        <ecNumber evidence="1">4.2.1.49</ecNumber>
    </recommendedName>
    <alternativeName>
        <fullName evidence="1">Imidazolonepropionate hydrolase</fullName>
    </alternativeName>
</protein>
<keyword id="KW-0963">Cytoplasm</keyword>
<keyword id="KW-0369">Histidine metabolism</keyword>
<keyword id="KW-0456">Lyase</keyword>
<keyword id="KW-0520">NAD</keyword>
<proteinExistence type="inferred from homology"/>
<gene>
    <name evidence="1" type="primary">hutU</name>
    <name type="ordered locus">ABSDF3584</name>
</gene>
<evidence type="ECO:0000255" key="1">
    <source>
        <dbReference type="HAMAP-Rule" id="MF_00577"/>
    </source>
</evidence>
<sequence>MTTTTTKFRDVEIRAPRGTELMAKSWLTEAPLRMLMNNLDPDVAENPKELVVYGGIGRAARNWECFDKIVDTLKNLETDETLLVQSGKPVGVFKTHKDAPRVLIANSNLVPHWANWEHFNELDAKALAMYGQMTAGSWIYIGSQGIVQGTYETFVEAGRQHYNGDLKGRWVLTAGLGGMGGAQPLAATLAGACSLNIECQQASIDFRLRTRYVDEQATDLDDALARIDRYTKEGKAISIALHGNAAEILPELVRRGVRPDMVTDQTSAHDPLNGYLPVGWTWDEYRERAKKEPEAVVKAAKQSMAKHVQAMLDFQKMGVPTFDYGNNIRQMAKEEGVANAFDFPGFVPAYIRPLFCRGIGPFRWAALSGDPEDIYKTDAKVKELIPDDEHLHHWLDMARERISFQGLPARICWVGLGLRAKLGLAFNEMVRSGELSAPIVIGRDHLDSGSVASPNRETEAMQDGSDAVSDWPLLNALLNTAGGATWVSLHHGGGVGMGFSQHSGVVIVCDGTDEAAARIARVLTNDPATGVMRHADAGYEIAINCAKEQGLHLPMITQ</sequence>
<feature type="chain" id="PRO_1000129554" description="Urocanate hydratase">
    <location>
        <begin position="1"/>
        <end position="558"/>
    </location>
</feature>
<feature type="active site" evidence="1">
    <location>
        <position position="412"/>
    </location>
</feature>
<feature type="binding site" evidence="1">
    <location>
        <begin position="54"/>
        <end position="55"/>
    </location>
    <ligand>
        <name>NAD(+)</name>
        <dbReference type="ChEBI" id="CHEBI:57540"/>
    </ligand>
</feature>
<feature type="binding site" evidence="1">
    <location>
        <position position="132"/>
    </location>
    <ligand>
        <name>NAD(+)</name>
        <dbReference type="ChEBI" id="CHEBI:57540"/>
    </ligand>
</feature>
<feature type="binding site" evidence="1">
    <location>
        <begin position="178"/>
        <end position="180"/>
    </location>
    <ligand>
        <name>NAD(+)</name>
        <dbReference type="ChEBI" id="CHEBI:57540"/>
    </ligand>
</feature>
<feature type="binding site" evidence="1">
    <location>
        <position position="198"/>
    </location>
    <ligand>
        <name>NAD(+)</name>
        <dbReference type="ChEBI" id="CHEBI:57540"/>
    </ligand>
</feature>
<feature type="binding site" evidence="1">
    <location>
        <begin position="244"/>
        <end position="245"/>
    </location>
    <ligand>
        <name>NAD(+)</name>
        <dbReference type="ChEBI" id="CHEBI:57540"/>
    </ligand>
</feature>
<feature type="binding site" evidence="1">
    <location>
        <begin position="265"/>
        <end position="269"/>
    </location>
    <ligand>
        <name>NAD(+)</name>
        <dbReference type="ChEBI" id="CHEBI:57540"/>
    </ligand>
</feature>
<feature type="binding site" evidence="1">
    <location>
        <begin position="275"/>
        <end position="276"/>
    </location>
    <ligand>
        <name>NAD(+)</name>
        <dbReference type="ChEBI" id="CHEBI:57540"/>
    </ligand>
</feature>
<feature type="binding site" evidence="1">
    <location>
        <position position="324"/>
    </location>
    <ligand>
        <name>NAD(+)</name>
        <dbReference type="ChEBI" id="CHEBI:57540"/>
    </ligand>
</feature>
<feature type="binding site" evidence="1">
    <location>
        <position position="494"/>
    </location>
    <ligand>
        <name>NAD(+)</name>
        <dbReference type="ChEBI" id="CHEBI:57540"/>
    </ligand>
</feature>
<dbReference type="EC" id="4.2.1.49" evidence="1"/>
<dbReference type="EMBL" id="CU468230">
    <property type="protein sequence ID" value="CAP02843.1"/>
    <property type="molecule type" value="Genomic_DNA"/>
</dbReference>
<dbReference type="SMR" id="B0VPV2"/>
<dbReference type="KEGG" id="abm:ABSDF3584"/>
<dbReference type="HOGENOM" id="CLU_018868_0_1_6"/>
<dbReference type="UniPathway" id="UPA00379">
    <property type="reaction ID" value="UER00550"/>
</dbReference>
<dbReference type="Proteomes" id="UP000001741">
    <property type="component" value="Chromosome"/>
</dbReference>
<dbReference type="GO" id="GO:0005737">
    <property type="term" value="C:cytoplasm"/>
    <property type="evidence" value="ECO:0007669"/>
    <property type="project" value="UniProtKB-SubCell"/>
</dbReference>
<dbReference type="GO" id="GO:0016153">
    <property type="term" value="F:urocanate hydratase activity"/>
    <property type="evidence" value="ECO:0007669"/>
    <property type="project" value="UniProtKB-UniRule"/>
</dbReference>
<dbReference type="GO" id="GO:0019556">
    <property type="term" value="P:L-histidine catabolic process to glutamate and formamide"/>
    <property type="evidence" value="ECO:0007669"/>
    <property type="project" value="UniProtKB-UniPathway"/>
</dbReference>
<dbReference type="GO" id="GO:0019557">
    <property type="term" value="P:L-histidine catabolic process to glutamate and formate"/>
    <property type="evidence" value="ECO:0007669"/>
    <property type="project" value="UniProtKB-UniPathway"/>
</dbReference>
<dbReference type="FunFam" id="3.40.50.10730:FF:000001">
    <property type="entry name" value="Urocanate hydratase"/>
    <property type="match status" value="1"/>
</dbReference>
<dbReference type="Gene3D" id="3.40.50.10730">
    <property type="entry name" value="Urocanase like domains"/>
    <property type="match status" value="1"/>
</dbReference>
<dbReference type="Gene3D" id="3.40.1770.10">
    <property type="entry name" value="Urocanase superfamily"/>
    <property type="match status" value="1"/>
</dbReference>
<dbReference type="HAMAP" id="MF_00577">
    <property type="entry name" value="HutU"/>
    <property type="match status" value="1"/>
</dbReference>
<dbReference type="InterPro" id="IPR055351">
    <property type="entry name" value="Urocanase"/>
</dbReference>
<dbReference type="InterPro" id="IPR023637">
    <property type="entry name" value="Urocanase-like"/>
</dbReference>
<dbReference type="InterPro" id="IPR035401">
    <property type="entry name" value="Urocanase_C"/>
</dbReference>
<dbReference type="InterPro" id="IPR038364">
    <property type="entry name" value="Urocanase_central_sf"/>
</dbReference>
<dbReference type="InterPro" id="IPR023636">
    <property type="entry name" value="Urocanase_CS"/>
</dbReference>
<dbReference type="InterPro" id="IPR035400">
    <property type="entry name" value="Urocanase_N"/>
</dbReference>
<dbReference type="InterPro" id="IPR035085">
    <property type="entry name" value="Urocanase_Rossmann-like"/>
</dbReference>
<dbReference type="InterPro" id="IPR036190">
    <property type="entry name" value="Urocanase_sf"/>
</dbReference>
<dbReference type="NCBIfam" id="TIGR01228">
    <property type="entry name" value="hutU"/>
    <property type="match status" value="1"/>
</dbReference>
<dbReference type="NCBIfam" id="NF003820">
    <property type="entry name" value="PRK05414.1"/>
    <property type="match status" value="1"/>
</dbReference>
<dbReference type="PANTHER" id="PTHR12216">
    <property type="entry name" value="UROCANATE HYDRATASE"/>
    <property type="match status" value="1"/>
</dbReference>
<dbReference type="PANTHER" id="PTHR12216:SF4">
    <property type="entry name" value="UROCANATE HYDRATASE"/>
    <property type="match status" value="1"/>
</dbReference>
<dbReference type="Pfam" id="PF01175">
    <property type="entry name" value="Urocanase"/>
    <property type="match status" value="1"/>
</dbReference>
<dbReference type="Pfam" id="PF17392">
    <property type="entry name" value="Urocanase_C"/>
    <property type="match status" value="1"/>
</dbReference>
<dbReference type="Pfam" id="PF17391">
    <property type="entry name" value="Urocanase_N"/>
    <property type="match status" value="1"/>
</dbReference>
<dbReference type="PIRSF" id="PIRSF001423">
    <property type="entry name" value="Urocanate_hydrat"/>
    <property type="match status" value="1"/>
</dbReference>
<dbReference type="SUPFAM" id="SSF111326">
    <property type="entry name" value="Urocanase"/>
    <property type="match status" value="1"/>
</dbReference>
<dbReference type="PROSITE" id="PS01233">
    <property type="entry name" value="UROCANASE"/>
    <property type="match status" value="1"/>
</dbReference>